<reference key="1">
    <citation type="journal article" date="1997" name="Nature">
        <title>The nucleotide sequence of Saccharomyces cerevisiae chromosome IV.</title>
        <authorList>
            <person name="Jacq C."/>
            <person name="Alt-Moerbe J."/>
            <person name="Andre B."/>
            <person name="Arnold W."/>
            <person name="Bahr A."/>
            <person name="Ballesta J.P.G."/>
            <person name="Bargues M."/>
            <person name="Baron L."/>
            <person name="Becker A."/>
            <person name="Biteau N."/>
            <person name="Bloecker H."/>
            <person name="Blugeon C."/>
            <person name="Boskovic J."/>
            <person name="Brandt P."/>
            <person name="Brueckner M."/>
            <person name="Buitrago M.J."/>
            <person name="Coster F."/>
            <person name="Delaveau T."/>
            <person name="del Rey F."/>
            <person name="Dujon B."/>
            <person name="Eide L.G."/>
            <person name="Garcia-Cantalejo J.M."/>
            <person name="Goffeau A."/>
            <person name="Gomez-Peris A."/>
            <person name="Granotier C."/>
            <person name="Hanemann V."/>
            <person name="Hankeln T."/>
            <person name="Hoheisel J.D."/>
            <person name="Jaeger W."/>
            <person name="Jimenez A."/>
            <person name="Jonniaux J.-L."/>
            <person name="Kraemer C."/>
            <person name="Kuester H."/>
            <person name="Laamanen P."/>
            <person name="Legros Y."/>
            <person name="Louis E.J."/>
            <person name="Moeller-Rieker S."/>
            <person name="Monnet A."/>
            <person name="Moro M."/>
            <person name="Mueller-Auer S."/>
            <person name="Nussbaumer B."/>
            <person name="Paricio N."/>
            <person name="Paulin L."/>
            <person name="Perea J."/>
            <person name="Perez-Alonso M."/>
            <person name="Perez-Ortin J.E."/>
            <person name="Pohl T.M."/>
            <person name="Prydz H."/>
            <person name="Purnelle B."/>
            <person name="Rasmussen S.W."/>
            <person name="Remacha M.A."/>
            <person name="Revuelta J.L."/>
            <person name="Rieger M."/>
            <person name="Salom D."/>
            <person name="Saluz H.P."/>
            <person name="Saiz J.E."/>
            <person name="Saren A.-M."/>
            <person name="Schaefer M."/>
            <person name="Scharfe M."/>
            <person name="Schmidt E.R."/>
            <person name="Schneider C."/>
            <person name="Scholler P."/>
            <person name="Schwarz S."/>
            <person name="Soler-Mira A."/>
            <person name="Urrestarazu L.A."/>
            <person name="Verhasselt P."/>
            <person name="Vissers S."/>
            <person name="Voet M."/>
            <person name="Volckaert G."/>
            <person name="Wagner G."/>
            <person name="Wambutt R."/>
            <person name="Wedler E."/>
            <person name="Wedler H."/>
            <person name="Woelfl S."/>
            <person name="Harris D.E."/>
            <person name="Bowman S."/>
            <person name="Brown D."/>
            <person name="Churcher C.M."/>
            <person name="Connor R."/>
            <person name="Dedman K."/>
            <person name="Gentles S."/>
            <person name="Hamlin N."/>
            <person name="Hunt S."/>
            <person name="Jones L."/>
            <person name="McDonald S."/>
            <person name="Murphy L.D."/>
            <person name="Niblett D."/>
            <person name="Odell C."/>
            <person name="Oliver K."/>
            <person name="Rajandream M.A."/>
            <person name="Richards C."/>
            <person name="Shore L."/>
            <person name="Walsh S.V."/>
            <person name="Barrell B.G."/>
            <person name="Dietrich F.S."/>
            <person name="Mulligan J.T."/>
            <person name="Allen E."/>
            <person name="Araujo R."/>
            <person name="Aviles E."/>
            <person name="Berno A."/>
            <person name="Carpenter J."/>
            <person name="Chen E."/>
            <person name="Cherry J.M."/>
            <person name="Chung E."/>
            <person name="Duncan M."/>
            <person name="Hunicke-Smith S."/>
            <person name="Hyman R.W."/>
            <person name="Komp C."/>
            <person name="Lashkari D."/>
            <person name="Lew H."/>
            <person name="Lin D."/>
            <person name="Mosedale D."/>
            <person name="Nakahara K."/>
            <person name="Namath A."/>
            <person name="Oefner P."/>
            <person name="Oh C."/>
            <person name="Petel F.X."/>
            <person name="Roberts D."/>
            <person name="Schramm S."/>
            <person name="Schroeder M."/>
            <person name="Shogren T."/>
            <person name="Shroff N."/>
            <person name="Winant A."/>
            <person name="Yelton M.A."/>
            <person name="Botstein D."/>
            <person name="Davis R.W."/>
            <person name="Johnston M."/>
            <person name="Andrews S."/>
            <person name="Brinkman R."/>
            <person name="Cooper J."/>
            <person name="Ding H."/>
            <person name="Du Z."/>
            <person name="Favello A."/>
            <person name="Fulton L."/>
            <person name="Gattung S."/>
            <person name="Greco T."/>
            <person name="Hallsworth K."/>
            <person name="Hawkins J."/>
            <person name="Hillier L.W."/>
            <person name="Jier M."/>
            <person name="Johnson D."/>
            <person name="Johnston L."/>
            <person name="Kirsten J."/>
            <person name="Kucaba T."/>
            <person name="Langston Y."/>
            <person name="Latreille P."/>
            <person name="Le T."/>
            <person name="Mardis E."/>
            <person name="Menezes S."/>
            <person name="Miller N."/>
            <person name="Nhan M."/>
            <person name="Pauley A."/>
            <person name="Peluso D."/>
            <person name="Rifkin L."/>
            <person name="Riles L."/>
            <person name="Taich A."/>
            <person name="Trevaskis E."/>
            <person name="Vignati D."/>
            <person name="Wilcox L."/>
            <person name="Wohldman P."/>
            <person name="Vaudin M."/>
            <person name="Wilson R."/>
            <person name="Waterston R."/>
            <person name="Albermann K."/>
            <person name="Hani J."/>
            <person name="Heumann K."/>
            <person name="Kleine K."/>
            <person name="Mewes H.-W."/>
            <person name="Zollner A."/>
            <person name="Zaccaria P."/>
        </authorList>
    </citation>
    <scope>NUCLEOTIDE SEQUENCE [LARGE SCALE GENOMIC DNA]</scope>
    <source>
        <strain>ATCC 204508 / S288c</strain>
    </source>
</reference>
<reference key="2">
    <citation type="journal article" date="2014" name="G3 (Bethesda)">
        <title>The reference genome sequence of Saccharomyces cerevisiae: Then and now.</title>
        <authorList>
            <person name="Engel S.R."/>
            <person name="Dietrich F.S."/>
            <person name="Fisk D.G."/>
            <person name="Binkley G."/>
            <person name="Balakrishnan R."/>
            <person name="Costanzo M.C."/>
            <person name="Dwight S.S."/>
            <person name="Hitz B.C."/>
            <person name="Karra K."/>
            <person name="Nash R.S."/>
            <person name="Weng S."/>
            <person name="Wong E.D."/>
            <person name="Lloyd P."/>
            <person name="Skrzypek M.S."/>
            <person name="Miyasato S.R."/>
            <person name="Simison M."/>
            <person name="Cherry J.M."/>
        </authorList>
    </citation>
    <scope>GENOME REANNOTATION</scope>
    <source>
        <strain>ATCC 204508 / S288c</strain>
    </source>
</reference>
<reference key="3">
    <citation type="journal article" date="2003" name="Nature">
        <title>Global analysis of protein localization in budding yeast.</title>
        <authorList>
            <person name="Huh W.-K."/>
            <person name="Falvo J.V."/>
            <person name="Gerke L.C."/>
            <person name="Carroll A.S."/>
            <person name="Howson R.W."/>
            <person name="Weissman J.S."/>
            <person name="O'Shea E.K."/>
        </authorList>
    </citation>
    <scope>SUBCELLULAR LOCATION [LARGE SCALE ANALYSIS]</scope>
</reference>
<reference key="4">
    <citation type="journal article" date="2003" name="Nature">
        <title>Global analysis of protein expression in yeast.</title>
        <authorList>
            <person name="Ghaemmaghami S."/>
            <person name="Huh W.-K."/>
            <person name="Bower K."/>
            <person name="Howson R.W."/>
            <person name="Belle A."/>
            <person name="Dephoure N."/>
            <person name="O'Shea E.K."/>
            <person name="Weissman J.S."/>
        </authorList>
    </citation>
    <scope>LEVEL OF PROTEIN EXPRESSION [LARGE SCALE ANALYSIS]</scope>
</reference>
<reference key="5">
    <citation type="journal article" date="2004" name="Yeast">
        <title>GUD1 (YDL238c) encodes Saccharomyces cerevisiae guanine deaminase, an enzyme expressed during post-diauxic growth.</title>
        <authorList>
            <person name="Saint-Marc C."/>
            <person name="Daignan-Fornier B."/>
        </authorList>
    </citation>
    <scope>FUNCTION</scope>
    <scope>BIOPHYSICOCHEMICAL PROPERTIES</scope>
    <scope>CATALYTIC ACTIVITY</scope>
</reference>
<name>GUAD_YEAST</name>
<organism>
    <name type="scientific">Saccharomyces cerevisiae (strain ATCC 204508 / S288c)</name>
    <name type="common">Baker's yeast</name>
    <dbReference type="NCBI Taxonomy" id="559292"/>
    <lineage>
        <taxon>Eukaryota</taxon>
        <taxon>Fungi</taxon>
        <taxon>Dikarya</taxon>
        <taxon>Ascomycota</taxon>
        <taxon>Saccharomycotina</taxon>
        <taxon>Saccharomycetes</taxon>
        <taxon>Saccharomycetales</taxon>
        <taxon>Saccharomycetaceae</taxon>
        <taxon>Saccharomyces</taxon>
    </lineage>
</organism>
<comment type="function">
    <text evidence="5">Catalyzes the hydrolytic deamination of guanine, producing xanthine and ammonia.</text>
</comment>
<comment type="catalytic activity">
    <reaction evidence="5">
        <text>guanine + H2O + H(+) = xanthine + NH4(+)</text>
        <dbReference type="Rhea" id="RHEA:14665"/>
        <dbReference type="ChEBI" id="CHEBI:15377"/>
        <dbReference type="ChEBI" id="CHEBI:15378"/>
        <dbReference type="ChEBI" id="CHEBI:16235"/>
        <dbReference type="ChEBI" id="CHEBI:17712"/>
        <dbReference type="ChEBI" id="CHEBI:28938"/>
        <dbReference type="EC" id="3.5.4.3"/>
    </reaction>
</comment>
<comment type="cofactor">
    <cofactor evidence="1">
        <name>Zn(2+)</name>
        <dbReference type="ChEBI" id="CHEBI:29105"/>
    </cofactor>
    <text evidence="1">Binds 1 zinc ion per subunit.</text>
</comment>
<comment type="biophysicochemical properties">
    <kinetics>
        <KM evidence="5">61.5 uM for guanine</KM>
    </kinetics>
</comment>
<comment type="pathway">
    <text>Purine metabolism; guanine degradation; xanthine from guanine: step 1/1.</text>
</comment>
<comment type="subcellular location">
    <subcellularLocation>
        <location evidence="3">Cytoplasm</location>
    </subcellularLocation>
</comment>
<comment type="miscellaneous">
    <text evidence="4">Present with 279 molecules/cell in log phase SD medium.</text>
</comment>
<comment type="similarity">
    <text evidence="6">Belongs to the metallo-dependent hydrolases superfamily. ATZ/TRZ family.</text>
</comment>
<keyword id="KW-0002">3D-structure</keyword>
<keyword id="KW-0963">Cytoplasm</keyword>
<keyword id="KW-0378">Hydrolase</keyword>
<keyword id="KW-0479">Metal-binding</keyword>
<keyword id="KW-1185">Reference proteome</keyword>
<keyword id="KW-0862">Zinc</keyword>
<proteinExistence type="evidence at protein level"/>
<protein>
    <recommendedName>
        <fullName>Probable guanine deaminase</fullName>
        <shortName>Guanase</shortName>
        <shortName>Guanine aminase</shortName>
        <ecNumber evidence="5">3.5.4.3</ecNumber>
    </recommendedName>
    <alternativeName>
        <fullName>Guanine aminohydrolase</fullName>
        <shortName>GAH</shortName>
    </alternativeName>
</protein>
<gene>
    <name type="primary">GUD1</name>
    <name type="ordered locus">YDL238C</name>
</gene>
<evidence type="ECO:0000250" key="1"/>
<evidence type="ECO:0000250" key="2">
    <source>
        <dbReference type="UniProtKB" id="Q9Y2T3"/>
    </source>
</evidence>
<evidence type="ECO:0000269" key="3">
    <source>
    </source>
</evidence>
<evidence type="ECO:0000269" key="4">
    <source>
    </source>
</evidence>
<evidence type="ECO:0000269" key="5">
    <source>
    </source>
</evidence>
<evidence type="ECO:0000305" key="6"/>
<evidence type="ECO:0007829" key="7">
    <source>
        <dbReference type="PDB" id="6OH9"/>
    </source>
</evidence>
<feature type="chain" id="PRO_0000122302" description="Probable guanine deaminase">
    <location>
        <begin position="1"/>
        <end position="489"/>
    </location>
</feature>
<feature type="binding site" evidence="2">
    <location>
        <position position="100"/>
    </location>
    <ligand>
        <name>Zn(2+)</name>
        <dbReference type="ChEBI" id="CHEBI:29105"/>
    </ligand>
</feature>
<feature type="binding site" evidence="2">
    <location>
        <begin position="102"/>
        <end position="105"/>
    </location>
    <ligand>
        <name>substrate</name>
    </ligand>
</feature>
<feature type="binding site" evidence="2">
    <location>
        <position position="102"/>
    </location>
    <ligand>
        <name>Zn(2+)</name>
        <dbReference type="ChEBI" id="CHEBI:29105"/>
    </ligand>
</feature>
<feature type="binding site" evidence="2">
    <location>
        <begin position="231"/>
        <end position="232"/>
    </location>
    <ligand>
        <name>substrate</name>
    </ligand>
</feature>
<feature type="binding site" evidence="2">
    <location>
        <begin position="258"/>
        <end position="261"/>
    </location>
    <ligand>
        <name>substrate</name>
    </ligand>
</feature>
<feature type="binding site" evidence="2">
    <location>
        <position position="258"/>
    </location>
    <ligand>
        <name>Zn(2+)</name>
        <dbReference type="ChEBI" id="CHEBI:29105"/>
    </ligand>
</feature>
<feature type="binding site" evidence="2">
    <location>
        <position position="348"/>
    </location>
    <ligand>
        <name>substrate</name>
    </ligand>
</feature>
<feature type="binding site" evidence="2">
    <location>
        <position position="348"/>
    </location>
    <ligand>
        <name>Zn(2+)</name>
        <dbReference type="ChEBI" id="CHEBI:29105"/>
    </ligand>
</feature>
<feature type="strand" evidence="7">
    <location>
        <begin position="18"/>
        <end position="27"/>
    </location>
</feature>
<feature type="strand" evidence="7">
    <location>
        <begin position="35"/>
        <end position="45"/>
    </location>
</feature>
<feature type="strand" evidence="7">
    <location>
        <begin position="48"/>
        <end position="53"/>
    </location>
</feature>
<feature type="helix" evidence="7">
    <location>
        <begin position="59"/>
        <end position="66"/>
    </location>
</feature>
<feature type="helix" evidence="7">
    <location>
        <begin position="72"/>
        <end position="74"/>
    </location>
</feature>
<feature type="strand" evidence="7">
    <location>
        <begin position="75"/>
        <end position="79"/>
    </location>
</feature>
<feature type="strand" evidence="7">
    <location>
        <begin position="90"/>
        <end position="94"/>
    </location>
</feature>
<feature type="strand" evidence="7">
    <location>
        <begin position="96"/>
        <end position="102"/>
    </location>
</feature>
<feature type="helix" evidence="7">
    <location>
        <begin position="103"/>
        <end position="108"/>
    </location>
</feature>
<feature type="helix" evidence="7">
    <location>
        <begin position="117"/>
        <end position="123"/>
    </location>
</feature>
<feature type="helix" evidence="7">
    <location>
        <begin position="125"/>
        <end position="131"/>
    </location>
</feature>
<feature type="helix" evidence="7">
    <location>
        <begin position="135"/>
        <end position="151"/>
    </location>
</feature>
<feature type="strand" evidence="7">
    <location>
        <begin position="154"/>
        <end position="160"/>
    </location>
</feature>
<feature type="helix" evidence="7">
    <location>
        <begin position="165"/>
        <end position="178"/>
    </location>
</feature>
<feature type="strand" evidence="7">
    <location>
        <begin position="181"/>
        <end position="185"/>
    </location>
</feature>
<feature type="strand" evidence="7">
    <location>
        <begin position="191"/>
        <end position="193"/>
    </location>
</feature>
<feature type="helix" evidence="7">
    <location>
        <begin position="201"/>
        <end position="217"/>
    </location>
</feature>
<feature type="strand" evidence="7">
    <location>
        <begin position="224"/>
        <end position="230"/>
    </location>
</feature>
<feature type="helix" evidence="7">
    <location>
        <begin position="233"/>
        <end position="235"/>
    </location>
</feature>
<feature type="helix" evidence="7">
    <location>
        <begin position="238"/>
        <end position="251"/>
    </location>
</feature>
<feature type="strand" evidence="7">
    <location>
        <begin position="254"/>
        <end position="260"/>
    </location>
</feature>
<feature type="helix" evidence="7">
    <location>
        <begin position="263"/>
        <end position="272"/>
    </location>
</feature>
<feature type="strand" evidence="7">
    <location>
        <begin position="276"/>
        <end position="278"/>
    </location>
</feature>
<feature type="helix" evidence="7">
    <location>
        <begin position="279"/>
        <end position="285"/>
    </location>
</feature>
<feature type="strand" evidence="7">
    <location>
        <begin position="293"/>
        <end position="297"/>
    </location>
</feature>
<feature type="helix" evidence="7">
    <location>
        <begin position="303"/>
        <end position="312"/>
    </location>
</feature>
<feature type="strand" evidence="7">
    <location>
        <begin position="315"/>
        <end position="318"/>
    </location>
</feature>
<feature type="helix" evidence="7">
    <location>
        <begin position="320"/>
        <end position="325"/>
    </location>
</feature>
<feature type="helix" evidence="7">
    <location>
        <begin position="333"/>
        <end position="338"/>
    </location>
</feature>
<feature type="strand" evidence="7">
    <location>
        <begin position="342"/>
        <end position="345"/>
    </location>
</feature>
<feature type="turn" evidence="7">
    <location>
        <begin position="349"/>
        <end position="351"/>
    </location>
</feature>
<feature type="helix" evidence="7">
    <location>
        <begin position="357"/>
        <end position="375"/>
    </location>
</feature>
<feature type="helix" evidence="7">
    <location>
        <begin position="377"/>
        <end position="379"/>
    </location>
</feature>
<feature type="helix" evidence="7">
    <location>
        <begin position="383"/>
        <end position="390"/>
    </location>
</feature>
<feature type="helix" evidence="7">
    <location>
        <begin position="392"/>
        <end position="397"/>
    </location>
</feature>
<feature type="turn" evidence="7">
    <location>
        <begin position="401"/>
        <end position="403"/>
    </location>
</feature>
<feature type="strand" evidence="7">
    <location>
        <begin position="404"/>
        <end position="407"/>
    </location>
</feature>
<feature type="strand" evidence="7">
    <location>
        <begin position="415"/>
        <end position="419"/>
    </location>
</feature>
<feature type="helix" evidence="7">
    <location>
        <begin position="431"/>
        <end position="433"/>
    </location>
</feature>
<feature type="helix" evidence="7">
    <location>
        <begin position="460"/>
        <end position="470"/>
    </location>
</feature>
<feature type="helix" evidence="7">
    <location>
        <begin position="473"/>
        <end position="475"/>
    </location>
</feature>
<feature type="strand" evidence="7">
    <location>
        <begin position="476"/>
        <end position="481"/>
    </location>
</feature>
<feature type="strand" evidence="7">
    <location>
        <begin position="484"/>
        <end position="488"/>
    </location>
</feature>
<sequence length="489" mass="55204">MTKSDLLFDKFNDKHGKFLVFFGTFVDTPKLGELRIREKTSVGVLNGIIRFVNRNSLDPVKDCLDHDSSLSPEDVTVVDIIGKDKTRNNSFYFPGFVDTHNHVSQYPNVGVFGNSTLLDWLEKYTFPIEAALANENIAREVYNKVISKTLSHGTTTVAYYNTIDLKSTKLLAQLSSLLGQRVLVGKVCMDTNGPEYYIEDTKTSFESTVKVVKYIRETICDPLVNPIVTPRFAPSCSRELMQQLSKLVKDENIHVQTHLSENKEEIQWVQDLFPECESYTDVYDKYGLLTEKTVLAHCIHLTDAEARVIKQRRCGISHCPISNSSLTSGECRVRWLLDQGIKVGLGTDVSAGHSCSILTTGRQAFAVSRHLAMRETDHAKLSVSECLFLATMGGAQVLRMDETLGTFDVGKQFDAQMIDTNAPGSNVDMFHWQLKEKDQMQEQEQEQGQDPYKNPPLLTNEDIIAKWFFNGDDRNTTKVWVAGQQVYQI</sequence>
<dbReference type="EC" id="3.5.4.3" evidence="5"/>
<dbReference type="EMBL" id="Z74286">
    <property type="protein sequence ID" value="CAA98818.1"/>
    <property type="molecule type" value="Genomic_DNA"/>
</dbReference>
<dbReference type="EMBL" id="BK006938">
    <property type="protein sequence ID" value="DAA11628.1"/>
    <property type="molecule type" value="Genomic_DNA"/>
</dbReference>
<dbReference type="PIR" id="S67802">
    <property type="entry name" value="S67802"/>
</dbReference>
<dbReference type="RefSeq" id="NP_010043.1">
    <property type="nucleotide sequence ID" value="NM_001180298.1"/>
</dbReference>
<dbReference type="PDB" id="6OH9">
    <property type="method" value="X-ray"/>
    <property type="resolution" value="1.75 A"/>
    <property type="chains" value="A=1-489"/>
</dbReference>
<dbReference type="PDB" id="6OHA">
    <property type="method" value="X-ray"/>
    <property type="resolution" value="2.21 A"/>
    <property type="chains" value="A=1-489"/>
</dbReference>
<dbReference type="PDBsum" id="6OH9"/>
<dbReference type="PDBsum" id="6OHA"/>
<dbReference type="SMR" id="Q07729"/>
<dbReference type="BioGRID" id="31873">
    <property type="interactions" value="41"/>
</dbReference>
<dbReference type="DIP" id="DIP-5170N"/>
<dbReference type="FunCoup" id="Q07729">
    <property type="interactions" value="203"/>
</dbReference>
<dbReference type="IntAct" id="Q07729">
    <property type="interactions" value="1"/>
</dbReference>
<dbReference type="MINT" id="Q07729"/>
<dbReference type="STRING" id="4932.YDL238C"/>
<dbReference type="iPTMnet" id="Q07729"/>
<dbReference type="PaxDb" id="4932-YDL238C"/>
<dbReference type="PeptideAtlas" id="Q07729"/>
<dbReference type="EnsemblFungi" id="YDL238C_mRNA">
    <property type="protein sequence ID" value="YDL238C"/>
    <property type="gene ID" value="YDL238C"/>
</dbReference>
<dbReference type="GeneID" id="851360"/>
<dbReference type="KEGG" id="sce:YDL238C"/>
<dbReference type="AGR" id="SGD:S000002397"/>
<dbReference type="SGD" id="S000002397">
    <property type="gene designation" value="GUD1"/>
</dbReference>
<dbReference type="VEuPathDB" id="FungiDB:YDL238C"/>
<dbReference type="eggNOG" id="KOG3968">
    <property type="taxonomic scope" value="Eukaryota"/>
</dbReference>
<dbReference type="GeneTree" id="ENSGT00390000017130"/>
<dbReference type="HOGENOM" id="CLU_012358_0_0_1"/>
<dbReference type="InParanoid" id="Q07729"/>
<dbReference type="OMA" id="CVHMNDS"/>
<dbReference type="OrthoDB" id="194468at2759"/>
<dbReference type="BioCyc" id="YEAST:MONOMER3O-12"/>
<dbReference type="BRENDA" id="3.5.4.3">
    <property type="organism ID" value="984"/>
</dbReference>
<dbReference type="Reactome" id="R-SCE-74259">
    <property type="pathway name" value="Purine catabolism"/>
</dbReference>
<dbReference type="SABIO-RK" id="Q07729"/>
<dbReference type="UniPathway" id="UPA00603">
    <property type="reaction ID" value="UER00660"/>
</dbReference>
<dbReference type="BioGRID-ORCS" id="851360">
    <property type="hits" value="4 hits in 10 CRISPR screens"/>
</dbReference>
<dbReference type="PRO" id="PR:Q07729"/>
<dbReference type="Proteomes" id="UP000002311">
    <property type="component" value="Chromosome IV"/>
</dbReference>
<dbReference type="RNAct" id="Q07729">
    <property type="molecule type" value="protein"/>
</dbReference>
<dbReference type="GO" id="GO:0005737">
    <property type="term" value="C:cytoplasm"/>
    <property type="evidence" value="ECO:0007005"/>
    <property type="project" value="SGD"/>
</dbReference>
<dbReference type="GO" id="GO:0005829">
    <property type="term" value="C:cytosol"/>
    <property type="evidence" value="ECO:0000318"/>
    <property type="project" value="GO_Central"/>
</dbReference>
<dbReference type="GO" id="GO:0008892">
    <property type="term" value="F:guanine deaminase activity"/>
    <property type="evidence" value="ECO:0000314"/>
    <property type="project" value="SGD"/>
</dbReference>
<dbReference type="GO" id="GO:0008270">
    <property type="term" value="F:zinc ion binding"/>
    <property type="evidence" value="ECO:0000318"/>
    <property type="project" value="GO_Central"/>
</dbReference>
<dbReference type="GO" id="GO:0006147">
    <property type="term" value="P:guanine catabolic process"/>
    <property type="evidence" value="ECO:0000314"/>
    <property type="project" value="SGD"/>
</dbReference>
<dbReference type="GO" id="GO:0046098">
    <property type="term" value="P:guanine metabolic process"/>
    <property type="evidence" value="ECO:0000318"/>
    <property type="project" value="GO_Central"/>
</dbReference>
<dbReference type="CDD" id="cd01303">
    <property type="entry name" value="GDEase"/>
    <property type="match status" value="1"/>
</dbReference>
<dbReference type="FunFam" id="3.20.20.140:FF:000022">
    <property type="entry name" value="Guanine deaminase"/>
    <property type="match status" value="1"/>
</dbReference>
<dbReference type="Gene3D" id="3.20.20.140">
    <property type="entry name" value="Metal-dependent hydrolases"/>
    <property type="match status" value="1"/>
</dbReference>
<dbReference type="Gene3D" id="2.30.40.10">
    <property type="entry name" value="Urease, subunit C, domain 1"/>
    <property type="match status" value="1"/>
</dbReference>
<dbReference type="InterPro" id="IPR006680">
    <property type="entry name" value="Amidohydro-rel"/>
</dbReference>
<dbReference type="InterPro" id="IPR014311">
    <property type="entry name" value="Guanine_deaminase"/>
</dbReference>
<dbReference type="InterPro" id="IPR011059">
    <property type="entry name" value="Metal-dep_hydrolase_composite"/>
</dbReference>
<dbReference type="InterPro" id="IPR032466">
    <property type="entry name" value="Metal_Hydrolase"/>
</dbReference>
<dbReference type="InterPro" id="IPR051607">
    <property type="entry name" value="Metallo-dep_hydrolases"/>
</dbReference>
<dbReference type="NCBIfam" id="TIGR02967">
    <property type="entry name" value="guan_deamin"/>
    <property type="match status" value="1"/>
</dbReference>
<dbReference type="PANTHER" id="PTHR11271">
    <property type="entry name" value="GUANINE DEAMINASE"/>
    <property type="match status" value="1"/>
</dbReference>
<dbReference type="PANTHER" id="PTHR11271:SF6">
    <property type="entry name" value="GUANINE DEAMINASE"/>
    <property type="match status" value="1"/>
</dbReference>
<dbReference type="Pfam" id="PF01979">
    <property type="entry name" value="Amidohydro_1"/>
    <property type="match status" value="1"/>
</dbReference>
<dbReference type="SUPFAM" id="SSF51556">
    <property type="entry name" value="Metallo-dependent hydrolases"/>
    <property type="match status" value="1"/>
</dbReference>
<accession>Q07729</accession>
<accession>D6VRB8</accession>